<feature type="chain" id="PRO_0000194281" description="Guanosine-5'-triphosphate,3'-diphosphate pyrophosphatase">
    <location>
        <begin position="1"/>
        <end position="494"/>
    </location>
</feature>
<protein>
    <recommendedName>
        <fullName evidence="1">Guanosine-5'-triphosphate,3'-diphosphate pyrophosphatase</fullName>
        <ecNumber evidence="1">3.6.1.40</ecNumber>
    </recommendedName>
    <alternativeName>
        <fullName evidence="1">Guanosine pentaphosphate phosphohydrolase</fullName>
    </alternativeName>
    <alternativeName>
        <fullName evidence="1">pppGpp-5'-phosphohydrolase</fullName>
    </alternativeName>
</protein>
<comment type="function">
    <text evidence="1">Catalyzes the conversion of pppGpp to ppGpp. Guanosine pentaphosphate (pppGpp) is a cytoplasmic signaling molecule which together with ppGpp controls the 'stringent response', an adaptive process that allows bacteria to respond to amino acid starvation, resulting in the coordinated regulation of numerous cellular activities.</text>
</comment>
<comment type="catalytic activity">
    <reaction evidence="1">
        <text>guanosine 3'-diphosphate 5'-triphosphate + H2O = guanosine 3',5'-bis(diphosphate) + phosphate + H(+)</text>
        <dbReference type="Rhea" id="RHEA:13073"/>
        <dbReference type="ChEBI" id="CHEBI:15377"/>
        <dbReference type="ChEBI" id="CHEBI:15378"/>
        <dbReference type="ChEBI" id="CHEBI:43474"/>
        <dbReference type="ChEBI" id="CHEBI:77828"/>
        <dbReference type="ChEBI" id="CHEBI:142410"/>
        <dbReference type="EC" id="3.6.1.40"/>
    </reaction>
</comment>
<comment type="pathway">
    <text evidence="1">Purine metabolism; ppGpp biosynthesis; ppGpp from GTP: step 2/2.</text>
</comment>
<comment type="similarity">
    <text evidence="1">Belongs to the GppA/Ppx family. GppA subfamily.</text>
</comment>
<gene>
    <name evidence="1" type="primary">gppA</name>
    <name type="ordered locus">Z5289</name>
    <name type="ordered locus">ECs4712</name>
</gene>
<proteinExistence type="inferred from homology"/>
<name>GPPA_ECO57</name>
<dbReference type="EC" id="3.6.1.40" evidence="1"/>
<dbReference type="EMBL" id="AE005174">
    <property type="protein sequence ID" value="AAG58973.1"/>
    <property type="molecule type" value="Genomic_DNA"/>
</dbReference>
<dbReference type="EMBL" id="BA000007">
    <property type="protein sequence ID" value="BAB38135.1"/>
    <property type="molecule type" value="Genomic_DNA"/>
</dbReference>
<dbReference type="PIR" id="A86064">
    <property type="entry name" value="A86064"/>
</dbReference>
<dbReference type="PIR" id="H91217">
    <property type="entry name" value="H91217"/>
</dbReference>
<dbReference type="RefSeq" id="WP_001295254.1">
    <property type="nucleotide sequence ID" value="NZ_VOAI01000017.1"/>
</dbReference>
<dbReference type="SMR" id="Q8XAT5"/>
<dbReference type="STRING" id="155864.Z5289"/>
<dbReference type="GeneID" id="75174011"/>
<dbReference type="KEGG" id="ece:Z5289"/>
<dbReference type="KEGG" id="ecs:ECs_4712"/>
<dbReference type="PATRIC" id="fig|386585.9.peg.4916"/>
<dbReference type="eggNOG" id="COG0248">
    <property type="taxonomic scope" value="Bacteria"/>
</dbReference>
<dbReference type="HOGENOM" id="CLU_025908_4_0_6"/>
<dbReference type="OMA" id="WQICVGA"/>
<dbReference type="UniPathway" id="UPA00908">
    <property type="reaction ID" value="UER00885"/>
</dbReference>
<dbReference type="Proteomes" id="UP000000558">
    <property type="component" value="Chromosome"/>
</dbReference>
<dbReference type="Proteomes" id="UP000002519">
    <property type="component" value="Chromosome"/>
</dbReference>
<dbReference type="GO" id="GO:0008894">
    <property type="term" value="F:guanosine-5'-triphosphate,3'-diphosphate diphosphatase activity"/>
    <property type="evidence" value="ECO:0007669"/>
    <property type="project" value="UniProtKB-UniRule"/>
</dbReference>
<dbReference type="GO" id="GO:0015974">
    <property type="term" value="P:guanosine pentaphosphate catabolic process"/>
    <property type="evidence" value="ECO:0007669"/>
    <property type="project" value="InterPro"/>
</dbReference>
<dbReference type="GO" id="GO:0015970">
    <property type="term" value="P:guanosine tetraphosphate biosynthetic process"/>
    <property type="evidence" value="ECO:0007669"/>
    <property type="project" value="UniProtKB-UniRule"/>
</dbReference>
<dbReference type="GO" id="GO:0015949">
    <property type="term" value="P:nucleobase-containing small molecule interconversion"/>
    <property type="evidence" value="ECO:0007669"/>
    <property type="project" value="TreeGrafter"/>
</dbReference>
<dbReference type="CDD" id="cd24117">
    <property type="entry name" value="ASKHA_NBD_EcGppA-like"/>
    <property type="match status" value="1"/>
</dbReference>
<dbReference type="FunFam" id="1.10.3210.10:FF:000004">
    <property type="entry name" value="Guanosine-5'-triphosphate,3'-diphosphate pyrophosphatase"/>
    <property type="match status" value="1"/>
</dbReference>
<dbReference type="FunFam" id="3.30.420.150:FF:000001">
    <property type="entry name" value="Guanosine-5'-triphosphate,3'-diphosphate pyrophosphatase"/>
    <property type="match status" value="1"/>
</dbReference>
<dbReference type="FunFam" id="3.30.420.40:FF:000023">
    <property type="entry name" value="Guanosine-5'-triphosphate,3'-diphosphate pyrophosphatase"/>
    <property type="match status" value="1"/>
</dbReference>
<dbReference type="Gene3D" id="3.30.420.40">
    <property type="match status" value="1"/>
</dbReference>
<dbReference type="Gene3D" id="3.30.420.150">
    <property type="entry name" value="Exopolyphosphatase. Domain 2"/>
    <property type="match status" value="1"/>
</dbReference>
<dbReference type="Gene3D" id="1.10.3210.10">
    <property type="entry name" value="Hypothetical protein af1432"/>
    <property type="match status" value="1"/>
</dbReference>
<dbReference type="HAMAP" id="MF_01550">
    <property type="entry name" value="GppA"/>
    <property type="match status" value="1"/>
</dbReference>
<dbReference type="InterPro" id="IPR043129">
    <property type="entry name" value="ATPase_NBD"/>
</dbReference>
<dbReference type="InterPro" id="IPR050273">
    <property type="entry name" value="GppA/Ppx_hydrolase"/>
</dbReference>
<dbReference type="InterPro" id="IPR023709">
    <property type="entry name" value="Guo-5TP_3DP_PyrP"/>
</dbReference>
<dbReference type="InterPro" id="IPR048950">
    <property type="entry name" value="Ppx_GppA_C"/>
</dbReference>
<dbReference type="InterPro" id="IPR003695">
    <property type="entry name" value="Ppx_GppA_N"/>
</dbReference>
<dbReference type="InterPro" id="IPR030673">
    <property type="entry name" value="PyroPPase_GppA_Ppx"/>
</dbReference>
<dbReference type="NCBIfam" id="NF008260">
    <property type="entry name" value="PRK11031.1"/>
    <property type="match status" value="1"/>
</dbReference>
<dbReference type="PANTHER" id="PTHR30005">
    <property type="entry name" value="EXOPOLYPHOSPHATASE"/>
    <property type="match status" value="1"/>
</dbReference>
<dbReference type="PANTHER" id="PTHR30005:SF0">
    <property type="entry name" value="RETROGRADE REGULATION PROTEIN 2"/>
    <property type="match status" value="1"/>
</dbReference>
<dbReference type="Pfam" id="PF02541">
    <property type="entry name" value="Ppx-GppA"/>
    <property type="match status" value="1"/>
</dbReference>
<dbReference type="Pfam" id="PF21447">
    <property type="entry name" value="Ppx-GppA_III"/>
    <property type="match status" value="1"/>
</dbReference>
<dbReference type="PIRSF" id="PIRSF001267">
    <property type="entry name" value="Pyrophosphatase_GppA_Ppx"/>
    <property type="match status" value="1"/>
</dbReference>
<dbReference type="SUPFAM" id="SSF53067">
    <property type="entry name" value="Actin-like ATPase domain"/>
    <property type="match status" value="2"/>
</dbReference>
<dbReference type="SUPFAM" id="SSF109604">
    <property type="entry name" value="HD-domain/PDEase-like"/>
    <property type="match status" value="1"/>
</dbReference>
<organism>
    <name type="scientific">Escherichia coli O157:H7</name>
    <dbReference type="NCBI Taxonomy" id="83334"/>
    <lineage>
        <taxon>Bacteria</taxon>
        <taxon>Pseudomonadati</taxon>
        <taxon>Pseudomonadota</taxon>
        <taxon>Gammaproteobacteria</taxon>
        <taxon>Enterobacterales</taxon>
        <taxon>Enterobacteriaceae</taxon>
        <taxon>Escherichia</taxon>
    </lineage>
</organism>
<sequence>MGSTSSLYAAIDLGSNSFHMLVVREVAGSIQTLTRIKRKVRLAAGLNSENALSNEAMERGWQCLRLFAERLQDIPPSQIRVVATATLRLAVNAGDFIAKAQEILGCPVQVISGEEEARLIYQGVAHTTGGADQRLVVDIGGASTELVTGTGAQTTSLFSLSMGCVTWLERYFADRNLGQENFDAAEKAAREVLRPVADELRYHGWKVCVGASGTVQALQEIMMAQGMDERITLEKLQQLKQRAIHCGRLEELEIDGLTLERALVFPSGLAILIAIFTELNIQCMTLAGGALREGLVYGMLHLAVEQDIRSRTLRNIQRRFMIDIDQAQRVAKVAANFFDQVENEWHLEAISRDLLISACQLHEIGLSVDFKQAPQHAAYLVRNLDLPGFTPAQKKLLATLLLNQTNPVDLSSLHQQNAVPPRVAEQLCRLLRLAIIFASRRRDDLVPEMTLQANHELLTLTLPQGWLTQHPLGKEIIAQESQWQSYVHWPLEVH</sequence>
<keyword id="KW-0378">Hydrolase</keyword>
<keyword id="KW-1185">Reference proteome</keyword>
<accession>Q8XAT5</accession>
<accession>Q7A9F8</accession>
<evidence type="ECO:0000255" key="1">
    <source>
        <dbReference type="HAMAP-Rule" id="MF_01550"/>
    </source>
</evidence>
<reference key="1">
    <citation type="journal article" date="2001" name="Nature">
        <title>Genome sequence of enterohaemorrhagic Escherichia coli O157:H7.</title>
        <authorList>
            <person name="Perna N.T."/>
            <person name="Plunkett G. III"/>
            <person name="Burland V."/>
            <person name="Mau B."/>
            <person name="Glasner J.D."/>
            <person name="Rose D.J."/>
            <person name="Mayhew G.F."/>
            <person name="Evans P.S."/>
            <person name="Gregor J."/>
            <person name="Kirkpatrick H.A."/>
            <person name="Posfai G."/>
            <person name="Hackett J."/>
            <person name="Klink S."/>
            <person name="Boutin A."/>
            <person name="Shao Y."/>
            <person name="Miller L."/>
            <person name="Grotbeck E.J."/>
            <person name="Davis N.W."/>
            <person name="Lim A."/>
            <person name="Dimalanta E.T."/>
            <person name="Potamousis K."/>
            <person name="Apodaca J."/>
            <person name="Anantharaman T.S."/>
            <person name="Lin J."/>
            <person name="Yen G."/>
            <person name="Schwartz D.C."/>
            <person name="Welch R.A."/>
            <person name="Blattner F.R."/>
        </authorList>
    </citation>
    <scope>NUCLEOTIDE SEQUENCE [LARGE SCALE GENOMIC DNA]</scope>
    <source>
        <strain>O157:H7 / EDL933 / ATCC 700927 / EHEC</strain>
    </source>
</reference>
<reference key="2">
    <citation type="journal article" date="2001" name="DNA Res.">
        <title>Complete genome sequence of enterohemorrhagic Escherichia coli O157:H7 and genomic comparison with a laboratory strain K-12.</title>
        <authorList>
            <person name="Hayashi T."/>
            <person name="Makino K."/>
            <person name="Ohnishi M."/>
            <person name="Kurokawa K."/>
            <person name="Ishii K."/>
            <person name="Yokoyama K."/>
            <person name="Han C.-G."/>
            <person name="Ohtsubo E."/>
            <person name="Nakayama K."/>
            <person name="Murata T."/>
            <person name="Tanaka M."/>
            <person name="Tobe T."/>
            <person name="Iida T."/>
            <person name="Takami H."/>
            <person name="Honda T."/>
            <person name="Sasakawa C."/>
            <person name="Ogasawara N."/>
            <person name="Yasunaga T."/>
            <person name="Kuhara S."/>
            <person name="Shiba T."/>
            <person name="Hattori M."/>
            <person name="Shinagawa H."/>
        </authorList>
    </citation>
    <scope>NUCLEOTIDE SEQUENCE [LARGE SCALE GENOMIC DNA]</scope>
    <source>
        <strain>O157:H7 / Sakai / RIMD 0509952 / EHEC</strain>
    </source>
</reference>